<proteinExistence type="inferred from homology"/>
<evidence type="ECO:0000250" key="1"/>
<evidence type="ECO:0000305" key="2"/>
<reference key="1">
    <citation type="journal article" date="2005" name="BMC Biol.">
        <title>The sequence of rice chromosomes 11 and 12, rich in disease resistance genes and recent gene duplications.</title>
        <authorList>
            <consortium name="The rice chromosomes 11 and 12 sequencing consortia"/>
        </authorList>
    </citation>
    <scope>NUCLEOTIDE SEQUENCE [LARGE SCALE GENOMIC DNA]</scope>
    <source>
        <strain>cv. Nipponbare</strain>
    </source>
</reference>
<reference key="2">
    <citation type="journal article" date="2005" name="Nature">
        <title>The map-based sequence of the rice genome.</title>
        <authorList>
            <consortium name="International rice genome sequencing project (IRGSP)"/>
        </authorList>
    </citation>
    <scope>NUCLEOTIDE SEQUENCE [LARGE SCALE GENOMIC DNA]</scope>
    <source>
        <strain>cv. Nipponbare</strain>
    </source>
</reference>
<reference key="3">
    <citation type="journal article" date="2008" name="Nucleic Acids Res.">
        <title>The rice annotation project database (RAP-DB): 2008 update.</title>
        <authorList>
            <consortium name="The rice annotation project (RAP)"/>
        </authorList>
    </citation>
    <scope>GENOME REANNOTATION</scope>
    <source>
        <strain>cv. Nipponbare</strain>
    </source>
</reference>
<reference key="4">
    <citation type="journal article" date="2013" name="Rice">
        <title>Improvement of the Oryza sativa Nipponbare reference genome using next generation sequence and optical map data.</title>
        <authorList>
            <person name="Kawahara Y."/>
            <person name="de la Bastide M."/>
            <person name="Hamilton J.P."/>
            <person name="Kanamori H."/>
            <person name="McCombie W.R."/>
            <person name="Ouyang S."/>
            <person name="Schwartz D.C."/>
            <person name="Tanaka T."/>
            <person name="Wu J."/>
            <person name="Zhou S."/>
            <person name="Childs K.L."/>
            <person name="Davidson R.M."/>
            <person name="Lin H."/>
            <person name="Quesada-Ocampo L."/>
            <person name="Vaillancourt B."/>
            <person name="Sakai H."/>
            <person name="Lee S.S."/>
            <person name="Kim J."/>
            <person name="Numa H."/>
            <person name="Itoh T."/>
            <person name="Buell C.R."/>
            <person name="Matsumoto T."/>
        </authorList>
    </citation>
    <scope>GENOME REANNOTATION</scope>
    <source>
        <strain>cv. Nipponbare</strain>
    </source>
</reference>
<name>CLH2_ORYSJ</name>
<gene>
    <name type="ordered locus">Os12g0104800</name>
    <name type="ordered locus">LOC_Os12g01390</name>
</gene>
<accession>Q2QYW2</accession>
<sequence>MAAANAPIAMREALTLTSLGIAPQFVTFTHVTMESEKYICVRETSPQNSVVIVDMAMPAQPLRRPITADSALMNPNTRILALKAQIPGTTQDHLQIFNIEAKTKIKSHQMPEQVVFWKWITPKLLGLVTQTSVYHWSIEGDSEPAKMFDRTANLANNQIINYRCDPSEKWLVLIGIAPGAPERPQLVKGNMQLFSVDQQRSQALEAHAASFASFKVVGNENPSTLICFASKTTNAGQITSKLHVIELGAQPGKPGFSKKQADLFFPPDFQDDFPVAMQISQKYGLIYVITKLGLLFVYDLETAAAVYRNRISPDPIFLTAESSASGGFYAINRRGQVLHATVNDATIVPFVSSQLNNLELAVNLAKRANLPGAENLVVQRFQELFAQTKYKEAAELAAESPQGLLRTPDTVAKFQSVPVQAGQTPPLLQYFGTLLTRGKLNAYESLELSRLVVNQNKKNLLENWLAEDKLECSEELGDLVKTVDNDLALKIYIKARATPKVVAAFAERREFDKILIYSKQVGYTPDYLFLLQTILRTDPQGAVNFALMMSQMEGGCPVDYNTITDLFLQRNMIREATAFLLDVLKPNLPEHAFLQTKVLEINLVTYPNVADAILANGMFSHYDRPRVAQLCEKAGLYLRALQHYTELPDIKRVMVNTHAIEPQALVEFFGTLSREWALECMKDLLLVNLRGNLQIVVQAAKEYSEQLGVDACIKLFEQFKSYEGLYFFLGAYLSSSEDPDIHFKYIEAAARTGQIKEVERVTRESNFYDAEKTKNFLMEAKLPDARPLINVCDRFGFVPDLTHYLYTNNMLRYIEGYVQKVNPGNAPLVVGQLLDDECPEDFIKGLILSVRSLLPVEPLVDECEKRNRLRLLTQFLEHLVSEGSQDVHVHNALGKIIIDSNNNPEHFLTTNPFYDSRVVGKYCEKRDPTLAVVAYRRGQCDDELINVTNKNSLFKLQARYVVERMDGDLWDKVLQPENEYRRQLIDQVVSTALPESKSPEQVSAAVKAFMTADLPHELIELLEKIVLQNSAFSGNFNLQNLLILTAIKADPSRVMDYVNRLDNFDGPAVGEVAVEAQLFEEAFAIFKKFNLNVQAVNVLLDNIRSIERAEEFAFRVEEDAVWSQVAKAQLREGLVSEAIESFIRADDATHFLDVIRAAEEANVYDDLVKYLLMVRQKAREPKVDGELIFAYAKIDRLSDIEEFILMPNVANLQNVGDRLYDEELYEAAKIIYAFISNWAKLAVTLVKLKQFQGAVDAARKANSAKTWKEVCFACVDAEEFRLAQICGLNIIVQVDDLEEVSEYYQNRGCFNELISLMESGLGLERAHMGIFTELGVLYARYRPEKLMEHIKLFSTRLNIPKLIRACDEQQHWKELTYLYIQYDEFDNAATTIMNHSPDAWDHMQFKDVAVKVANVELYYKAVHFYLQEHPDLINDLLNVLALRLDHTRVVDIMRKAGQLHLVKPYMVAVQSNNVSAVNESLNELYVEEEDYERLRESVDMHDNFDQIGLAQKLEKHELLEMRRIAAYIYKKAGRWKQSIALSKKDNMYKDCMETCSQSGDRELSEDLLVYFIEQGKKECFASCLFICYDLIRADVALELAWMNNMVDFAFPYLLQFIREYTSKVDELVKDRIESQNEVRAKEKEEKDLVAQQNMYAQLLPLALPAPPGMGGPPPPMGMPGMPPMGGMGMPPMGPGPMPAYGMPPMGSY</sequence>
<protein>
    <recommendedName>
        <fullName>Clathrin heavy chain 2</fullName>
    </recommendedName>
</protein>
<comment type="function">
    <text>Clathrin is the major protein of the polyhedral coat of coated pits and vesicles.</text>
</comment>
<comment type="subunit">
    <text evidence="1">Clathrin triskelions, composed of 3 heavy chains and 3 light chains, are the basic subunits of the clathrin coat.</text>
</comment>
<comment type="subcellular location">
    <subcellularLocation>
        <location evidence="1">Cytoplasmic vesicle membrane</location>
        <topology evidence="1">Peripheral membrane protein</topology>
        <orientation evidence="1">Cytoplasmic side</orientation>
    </subcellularLocation>
    <subcellularLocation>
        <location evidence="1">Membrane</location>
        <location evidence="1">Coated pit</location>
        <topology evidence="1">Peripheral membrane protein</topology>
        <orientation evidence="1">Cytoplasmic side</orientation>
    </subcellularLocation>
    <text evidence="1">Cytoplasmic face of coated pits and vesicles.</text>
</comment>
<comment type="domain">
    <text>The C-terminal third of the heavy chains forms the hub of the triskelion. This region contains the trimerization domain and the light-chain binding domain involved in the assembly of the clathrin lattice.</text>
</comment>
<comment type="domain">
    <text evidence="1">The N-terminal seven-bladed beta-propeller is formed by WD40-like repeats, and projects inward from the polyhedral outer clathrin coat. It constitutes a major protein-protein interaction node (By similarity).</text>
</comment>
<comment type="similarity">
    <text evidence="2">Belongs to the clathrin heavy chain family.</text>
</comment>
<keyword id="KW-0168">Coated pit</keyword>
<keyword id="KW-0968">Cytoplasmic vesicle</keyword>
<keyword id="KW-0472">Membrane</keyword>
<keyword id="KW-1185">Reference proteome</keyword>
<keyword id="KW-0677">Repeat</keyword>
<organism>
    <name type="scientific">Oryza sativa subsp. japonica</name>
    <name type="common">Rice</name>
    <dbReference type="NCBI Taxonomy" id="39947"/>
    <lineage>
        <taxon>Eukaryota</taxon>
        <taxon>Viridiplantae</taxon>
        <taxon>Streptophyta</taxon>
        <taxon>Embryophyta</taxon>
        <taxon>Tracheophyta</taxon>
        <taxon>Spermatophyta</taxon>
        <taxon>Magnoliopsida</taxon>
        <taxon>Liliopsida</taxon>
        <taxon>Poales</taxon>
        <taxon>Poaceae</taxon>
        <taxon>BOP clade</taxon>
        <taxon>Oryzoideae</taxon>
        <taxon>Oryzeae</taxon>
        <taxon>Oryzinae</taxon>
        <taxon>Oryza</taxon>
        <taxon>Oryza sativa</taxon>
    </lineage>
</organism>
<dbReference type="EMBL" id="DP000011">
    <property type="protein sequence ID" value="ABA95598.1"/>
    <property type="molecule type" value="Genomic_DNA"/>
</dbReference>
<dbReference type="EMBL" id="AP008218">
    <property type="status" value="NOT_ANNOTATED_CDS"/>
    <property type="molecule type" value="Genomic_DNA"/>
</dbReference>
<dbReference type="EMBL" id="AP014968">
    <property type="status" value="NOT_ANNOTATED_CDS"/>
    <property type="molecule type" value="Genomic_DNA"/>
</dbReference>
<dbReference type="SMR" id="Q2QYW2"/>
<dbReference type="FunCoup" id="Q2QYW2">
    <property type="interactions" value="3664"/>
</dbReference>
<dbReference type="STRING" id="39947.Q2QYW2"/>
<dbReference type="PaxDb" id="39947-Q2QYW2"/>
<dbReference type="KEGG" id="osa:4351255"/>
<dbReference type="HOGENOM" id="CLU_002136_1_0_1"/>
<dbReference type="InParanoid" id="Q2QYW2"/>
<dbReference type="OrthoDB" id="1853790at2759"/>
<dbReference type="Proteomes" id="UP000000763">
    <property type="component" value="Chromosome 12"/>
</dbReference>
<dbReference type="Proteomes" id="UP000059680">
    <property type="component" value="Chromosome 12"/>
</dbReference>
<dbReference type="GO" id="GO:0030132">
    <property type="term" value="C:clathrin coat of coated pit"/>
    <property type="evidence" value="ECO:0007669"/>
    <property type="project" value="InterPro"/>
</dbReference>
<dbReference type="GO" id="GO:0030130">
    <property type="term" value="C:clathrin coat of trans-Golgi network vesicle"/>
    <property type="evidence" value="ECO:0007669"/>
    <property type="project" value="InterPro"/>
</dbReference>
<dbReference type="GO" id="GO:0071439">
    <property type="term" value="C:clathrin complex"/>
    <property type="evidence" value="ECO:0000318"/>
    <property type="project" value="GO_Central"/>
</dbReference>
<dbReference type="GO" id="GO:0032051">
    <property type="term" value="F:clathrin light chain binding"/>
    <property type="evidence" value="ECO:0000318"/>
    <property type="project" value="GO_Central"/>
</dbReference>
<dbReference type="GO" id="GO:0005198">
    <property type="term" value="F:structural molecule activity"/>
    <property type="evidence" value="ECO:0007669"/>
    <property type="project" value="InterPro"/>
</dbReference>
<dbReference type="GO" id="GO:0006886">
    <property type="term" value="P:intracellular protein transport"/>
    <property type="evidence" value="ECO:0007669"/>
    <property type="project" value="InterPro"/>
</dbReference>
<dbReference type="GO" id="GO:0006898">
    <property type="term" value="P:receptor-mediated endocytosis"/>
    <property type="evidence" value="ECO:0000318"/>
    <property type="project" value="GO_Central"/>
</dbReference>
<dbReference type="FunFam" id="1.25.40.10:FF:000001">
    <property type="entry name" value="Clathrin heavy chain"/>
    <property type="match status" value="1"/>
</dbReference>
<dbReference type="FunFam" id="1.25.40.10:FF:000002">
    <property type="entry name" value="Clathrin heavy chain"/>
    <property type="match status" value="1"/>
</dbReference>
<dbReference type="FunFam" id="1.25.40.10:FF:000005">
    <property type="entry name" value="Clathrin heavy chain"/>
    <property type="match status" value="1"/>
</dbReference>
<dbReference type="FunFam" id="1.25.40.10:FF:000686">
    <property type="entry name" value="Clathrin heavy chain"/>
    <property type="match status" value="1"/>
</dbReference>
<dbReference type="FunFam" id="1.25.40.730:FF:000002">
    <property type="entry name" value="Clathrin heavy chain"/>
    <property type="match status" value="1"/>
</dbReference>
<dbReference type="FunFam" id="2.130.10.110:FF:000002">
    <property type="entry name" value="Clathrin heavy chain"/>
    <property type="match status" value="1"/>
</dbReference>
<dbReference type="Gene3D" id="1.25.40.730">
    <property type="match status" value="1"/>
</dbReference>
<dbReference type="Gene3D" id="2.130.10.110">
    <property type="entry name" value="Clathrin heavy-chain terminal domain"/>
    <property type="match status" value="1"/>
</dbReference>
<dbReference type="Gene3D" id="1.25.40.10">
    <property type="entry name" value="Tetratricopeptide repeat domain"/>
    <property type="match status" value="3"/>
</dbReference>
<dbReference type="InterPro" id="IPR016024">
    <property type="entry name" value="ARM-type_fold"/>
</dbReference>
<dbReference type="InterPro" id="IPR055358">
    <property type="entry name" value="CHCR"/>
</dbReference>
<dbReference type="InterPro" id="IPR000547">
    <property type="entry name" value="Clathrin_H-chain/VPS_repeat"/>
</dbReference>
<dbReference type="InterPro" id="IPR015348">
    <property type="entry name" value="Clathrin_H-chain_linker_core"/>
</dbReference>
<dbReference type="InterPro" id="IPR016025">
    <property type="entry name" value="Clathrin_H-chain_N"/>
</dbReference>
<dbReference type="InterPro" id="IPR022365">
    <property type="entry name" value="Clathrin_H-chain_propeller_rpt"/>
</dbReference>
<dbReference type="InterPro" id="IPR016341">
    <property type="entry name" value="Clathrin_heavy_chain"/>
</dbReference>
<dbReference type="InterPro" id="IPR011990">
    <property type="entry name" value="TPR-like_helical_dom_sf"/>
</dbReference>
<dbReference type="PANTHER" id="PTHR10292:SF1">
    <property type="entry name" value="CLATHRIN HEAVY CHAIN"/>
    <property type="match status" value="1"/>
</dbReference>
<dbReference type="PANTHER" id="PTHR10292">
    <property type="entry name" value="CLATHRIN HEAVY CHAIN RELATED"/>
    <property type="match status" value="1"/>
</dbReference>
<dbReference type="Pfam" id="PF00637">
    <property type="entry name" value="Clathrin"/>
    <property type="match status" value="7"/>
</dbReference>
<dbReference type="Pfam" id="PF09268">
    <property type="entry name" value="Clathrin-link"/>
    <property type="match status" value="1"/>
</dbReference>
<dbReference type="Pfam" id="PF13838">
    <property type="entry name" value="Clathrin_H_link"/>
    <property type="match status" value="1"/>
</dbReference>
<dbReference type="Pfam" id="PF01394">
    <property type="entry name" value="Clathrin_propel"/>
    <property type="match status" value="2"/>
</dbReference>
<dbReference type="PIRSF" id="PIRSF002290">
    <property type="entry name" value="Clathrin_H_chain"/>
    <property type="match status" value="1"/>
</dbReference>
<dbReference type="SMART" id="SM00299">
    <property type="entry name" value="CLH"/>
    <property type="match status" value="7"/>
</dbReference>
<dbReference type="SUPFAM" id="SSF48371">
    <property type="entry name" value="ARM repeat"/>
    <property type="match status" value="5"/>
</dbReference>
<dbReference type="SUPFAM" id="SSF50989">
    <property type="entry name" value="Clathrin heavy-chain terminal domain"/>
    <property type="match status" value="1"/>
</dbReference>
<dbReference type="PROSITE" id="PS50236">
    <property type="entry name" value="CHCR"/>
    <property type="match status" value="7"/>
</dbReference>
<feature type="chain" id="PRO_0000414016" description="Clathrin heavy chain 2">
    <location>
        <begin position="1"/>
        <end position="1708"/>
    </location>
</feature>
<feature type="repeat" description="CHCR 1">
    <location>
        <begin position="551"/>
        <end position="697"/>
    </location>
</feature>
<feature type="repeat" description="CHCR 2">
    <location>
        <begin position="700"/>
        <end position="842"/>
    </location>
</feature>
<feature type="repeat" description="CHCR 3">
    <location>
        <begin position="847"/>
        <end position="986"/>
    </location>
</feature>
<feature type="repeat" description="CHCR 4">
    <location>
        <begin position="993"/>
        <end position="1138"/>
    </location>
</feature>
<feature type="repeat" description="CHCR 5">
    <location>
        <begin position="1142"/>
        <end position="1283"/>
    </location>
</feature>
<feature type="repeat" description="CHCR 6">
    <location>
        <begin position="1288"/>
        <end position="1434"/>
    </location>
</feature>
<feature type="repeat" description="CHCR 7">
    <location>
        <begin position="1437"/>
        <end position="1580"/>
    </location>
</feature>
<feature type="region of interest" description="Globular terminal domain" evidence="1">
    <location>
        <begin position="1"/>
        <end position="492"/>
    </location>
</feature>
<feature type="region of interest" description="WD40-like repeat 1">
    <location>
        <begin position="25"/>
        <end position="67"/>
    </location>
</feature>
<feature type="region of interest" description="WD40-like repeat 2">
    <location>
        <begin position="68"/>
        <end position="113"/>
    </location>
</feature>
<feature type="region of interest" description="WD40-like repeat 3">
    <location>
        <begin position="114"/>
        <end position="155"/>
    </location>
</feature>
<feature type="region of interest" description="WD40-like repeat 4">
    <location>
        <begin position="156"/>
        <end position="205"/>
    </location>
</feature>
<feature type="region of interest" description="WD40-like repeat 5">
    <location>
        <begin position="206"/>
        <end position="270"/>
    </location>
</feature>
<feature type="region of interest" description="WD40-like repeat 6">
    <location>
        <begin position="271"/>
        <end position="314"/>
    </location>
</feature>
<feature type="region of interest" description="WD40-like repeat 7">
    <location>
        <begin position="315"/>
        <end position="343"/>
    </location>
</feature>
<feature type="region of interest" description="Binding site for the uncoating ATPase, involved in lattice disassembly" evidence="1">
    <location>
        <begin position="462"/>
        <end position="478"/>
    </location>
</feature>
<feature type="region of interest" description="Flexible linker" evidence="1">
    <location>
        <begin position="493"/>
        <end position="536"/>
    </location>
</feature>
<feature type="region of interest" description="Heavy chain arm" evidence="1">
    <location>
        <begin position="537"/>
        <end position="1708"/>
    </location>
</feature>
<feature type="region of interest" description="Distal segment" evidence="1">
    <location>
        <begin position="537"/>
        <end position="648"/>
    </location>
</feature>
<feature type="region of interest" description="Proximal segment" evidence="1">
    <location>
        <begin position="653"/>
        <end position="1708"/>
    </location>
</feature>
<feature type="region of interest" description="Involved in binding clathrin light chain" evidence="1">
    <location>
        <begin position="1227"/>
        <end position="1536"/>
    </location>
</feature>
<feature type="region of interest" description="Trimerization" evidence="1">
    <location>
        <begin position="1564"/>
        <end position="1708"/>
    </location>
</feature>